<feature type="chain" id="PRO_0000149673" description="Large ribosomal subunit protein eL21">
    <location>
        <begin position="1" status="less than"/>
        <end position="33" status="greater than"/>
    </location>
</feature>
<feature type="non-terminal residue">
    <location>
        <position position="1"/>
    </location>
</feature>
<feature type="non-terminal residue">
    <location>
        <position position="33"/>
    </location>
</feature>
<organism>
    <name type="scientific">Xenopus laevis</name>
    <name type="common">African clawed frog</name>
    <dbReference type="NCBI Taxonomy" id="8355"/>
    <lineage>
        <taxon>Eukaryota</taxon>
        <taxon>Metazoa</taxon>
        <taxon>Chordata</taxon>
        <taxon>Craniata</taxon>
        <taxon>Vertebrata</taxon>
        <taxon>Euteleostomi</taxon>
        <taxon>Amphibia</taxon>
        <taxon>Batrachia</taxon>
        <taxon>Anura</taxon>
        <taxon>Pipoidea</taxon>
        <taxon>Pipidae</taxon>
        <taxon>Xenopodinae</taxon>
        <taxon>Xenopus</taxon>
        <taxon>Xenopus</taxon>
    </lineage>
</organism>
<dbReference type="EMBL" id="X64210">
    <property type="protein sequence ID" value="CAB56810.1"/>
    <property type="molecule type" value="mRNA"/>
</dbReference>
<dbReference type="PIR" id="S22602">
    <property type="entry name" value="S22602"/>
</dbReference>
<dbReference type="SMR" id="P49628"/>
<dbReference type="AGR" id="Xenbase:XB-GENE-979614"/>
<dbReference type="Xenbase" id="XB-GENE-979614">
    <property type="gene designation" value="rpl21.L"/>
</dbReference>
<dbReference type="CD-CODE" id="78E86D56">
    <property type="entry name" value="Mitochondrial cloud"/>
</dbReference>
<dbReference type="Proteomes" id="UP000186698">
    <property type="component" value="Unplaced"/>
</dbReference>
<dbReference type="GO" id="GO:0005829">
    <property type="term" value="C:cytosol"/>
    <property type="evidence" value="ECO:0007669"/>
    <property type="project" value="UniProtKB-SubCell"/>
</dbReference>
<dbReference type="GO" id="GO:0005783">
    <property type="term" value="C:endoplasmic reticulum"/>
    <property type="evidence" value="ECO:0007669"/>
    <property type="project" value="UniProtKB-SubCell"/>
</dbReference>
<dbReference type="GO" id="GO:1990904">
    <property type="term" value="C:ribonucleoprotein complex"/>
    <property type="evidence" value="ECO:0007669"/>
    <property type="project" value="UniProtKB-KW"/>
</dbReference>
<dbReference type="GO" id="GO:0005840">
    <property type="term" value="C:ribosome"/>
    <property type="evidence" value="ECO:0007669"/>
    <property type="project" value="UniProtKB-KW"/>
</dbReference>
<dbReference type="GO" id="GO:0003735">
    <property type="term" value="F:structural constituent of ribosome"/>
    <property type="evidence" value="ECO:0007669"/>
    <property type="project" value="InterPro"/>
</dbReference>
<dbReference type="GO" id="GO:0006412">
    <property type="term" value="P:translation"/>
    <property type="evidence" value="ECO:0007669"/>
    <property type="project" value="InterPro"/>
</dbReference>
<dbReference type="Gene3D" id="2.30.30.70">
    <property type="entry name" value="Ribosomal protein L21"/>
    <property type="match status" value="1"/>
</dbReference>
<dbReference type="InterPro" id="IPR001147">
    <property type="entry name" value="Ribosomal_eL21"/>
</dbReference>
<dbReference type="InterPro" id="IPR036948">
    <property type="entry name" value="Ribosomal_eL21_sf"/>
</dbReference>
<dbReference type="InterPro" id="IPR008991">
    <property type="entry name" value="Translation_prot_SH3-like_sf"/>
</dbReference>
<dbReference type="PANTHER" id="PTHR20981">
    <property type="entry name" value="60S RIBOSOMAL PROTEIN L21"/>
    <property type="match status" value="1"/>
</dbReference>
<dbReference type="Pfam" id="PF01157">
    <property type="entry name" value="Ribosomal_L21e"/>
    <property type="match status" value="1"/>
</dbReference>
<dbReference type="SUPFAM" id="SSF50104">
    <property type="entry name" value="Translation proteins SH3-like domain"/>
    <property type="match status" value="1"/>
</dbReference>
<proteinExistence type="evidence at transcript level"/>
<accession>P49628</accession>
<evidence type="ECO:0000250" key="1">
    <source>
        <dbReference type="UniProtKB" id="P46778"/>
    </source>
</evidence>
<evidence type="ECO:0000250" key="2">
    <source>
        <dbReference type="UniProtKB" id="P49666"/>
    </source>
</evidence>
<evidence type="ECO:0000305" key="3"/>
<sequence>RPFRKHGAVPLSTYMRIYKKGDIVDIKGMGTIQ</sequence>
<comment type="function">
    <text evidence="1">Component of the large ribosomal subunit. The ribosome is a large ribonucleoprotein complex responsible for the synthesis of proteins in the cell.</text>
</comment>
<comment type="subunit">
    <text evidence="1">Component of the large ribosomal subunit.</text>
</comment>
<comment type="subcellular location">
    <subcellularLocation>
        <location evidence="1">Cytoplasm</location>
        <location evidence="1">Cytosol</location>
    </subcellularLocation>
    <subcellularLocation>
        <location evidence="1">Cytoplasm</location>
    </subcellularLocation>
    <subcellularLocation>
        <location evidence="2">Endoplasmic reticulum</location>
    </subcellularLocation>
    <text evidence="1 2">Detected on cytosolic polysomes (By similarity). Detected in ribosomes that are associated with the rough endoplasmic reticulum (By similarity).</text>
</comment>
<comment type="similarity">
    <text evidence="3">Belongs to the eukaryotic ribosomal protein eL21 family.</text>
</comment>
<protein>
    <recommendedName>
        <fullName evidence="3">Large ribosomal subunit protein eL21</fullName>
    </recommendedName>
    <alternativeName>
        <fullName>60S ribosomal protein L21</fullName>
    </alternativeName>
</protein>
<name>RL21_XENLA</name>
<keyword id="KW-0963">Cytoplasm</keyword>
<keyword id="KW-0256">Endoplasmic reticulum</keyword>
<keyword id="KW-1185">Reference proteome</keyword>
<keyword id="KW-0687">Ribonucleoprotein</keyword>
<keyword id="KW-0689">Ribosomal protein</keyword>
<reference key="1">
    <citation type="journal article" date="1992" name="Nucleic Acids Res.">
        <title>Analysis of mRNAs under translational control during Xenopus embryogenesis: isolation of new ribosomal protein clones.</title>
        <authorList>
            <person name="Loreni F."/>
            <person name="Francesconi A."/>
            <person name="Jappelli R."/>
            <person name="Amaldi F."/>
        </authorList>
    </citation>
    <scope>NUCLEOTIDE SEQUENCE [MRNA]</scope>
</reference>
<gene>
    <name type="primary">rpl21</name>
</gene>